<comment type="function">
    <text evidence="1">ATPase subunit of a proteasome-like degradation complex; this subunit has chaperone activity. The binding of ATP and its subsequent hydrolysis by HslU are essential for unfolding of protein substrates subsequently hydrolyzed by HslV. HslU recognizes the N-terminal part of its protein substrates and unfolds these before they are guided to HslV for hydrolysis.</text>
</comment>
<comment type="subunit">
    <text evidence="1">A double ring-shaped homohexamer of HslV is capped on each side by a ring-shaped HslU homohexamer. The assembly of the HslU/HslV complex is dependent on binding of ATP.</text>
</comment>
<comment type="subcellular location">
    <subcellularLocation>
        <location evidence="1">Cytoplasm</location>
    </subcellularLocation>
</comment>
<comment type="similarity">
    <text evidence="1">Belongs to the ClpX chaperone family. HslU subfamily.</text>
</comment>
<gene>
    <name evidence="1" type="primary">hslU</name>
    <name type="ordered locus">Tpet_0399</name>
</gene>
<reference key="1">
    <citation type="submission" date="2007-05" db="EMBL/GenBank/DDBJ databases">
        <title>Complete sequence of Thermotoga petrophila RKU-1.</title>
        <authorList>
            <consortium name="US DOE Joint Genome Institute"/>
            <person name="Copeland A."/>
            <person name="Lucas S."/>
            <person name="Lapidus A."/>
            <person name="Barry K."/>
            <person name="Glavina del Rio T."/>
            <person name="Dalin E."/>
            <person name="Tice H."/>
            <person name="Pitluck S."/>
            <person name="Sims D."/>
            <person name="Brettin T."/>
            <person name="Bruce D."/>
            <person name="Detter J.C."/>
            <person name="Han C."/>
            <person name="Tapia R."/>
            <person name="Schmutz J."/>
            <person name="Larimer F."/>
            <person name="Land M."/>
            <person name="Hauser L."/>
            <person name="Kyrpides N."/>
            <person name="Mikhailova N."/>
            <person name="Nelson K."/>
            <person name="Gogarten J.P."/>
            <person name="Noll K."/>
            <person name="Richardson P."/>
        </authorList>
    </citation>
    <scope>NUCLEOTIDE SEQUENCE [LARGE SCALE GENOMIC DNA]</scope>
    <source>
        <strain>ATCC BAA-488 / DSM 13995 / JCM 10881 / RKU-1</strain>
    </source>
</reference>
<evidence type="ECO:0000255" key="1">
    <source>
        <dbReference type="HAMAP-Rule" id="MF_00249"/>
    </source>
</evidence>
<dbReference type="EMBL" id="CP000702">
    <property type="protein sequence ID" value="ABQ46425.1"/>
    <property type="molecule type" value="Genomic_DNA"/>
</dbReference>
<dbReference type="RefSeq" id="WP_011943052.1">
    <property type="nucleotide sequence ID" value="NC_009486.1"/>
</dbReference>
<dbReference type="SMR" id="A5IJQ2"/>
<dbReference type="STRING" id="390874.Tpet_0399"/>
<dbReference type="KEGG" id="tpt:Tpet_0399"/>
<dbReference type="eggNOG" id="COG1220">
    <property type="taxonomic scope" value="Bacteria"/>
</dbReference>
<dbReference type="HOGENOM" id="CLU_033123_0_0_0"/>
<dbReference type="Proteomes" id="UP000006558">
    <property type="component" value="Chromosome"/>
</dbReference>
<dbReference type="GO" id="GO:0009376">
    <property type="term" value="C:HslUV protease complex"/>
    <property type="evidence" value="ECO:0007669"/>
    <property type="project" value="UniProtKB-UniRule"/>
</dbReference>
<dbReference type="GO" id="GO:0005524">
    <property type="term" value="F:ATP binding"/>
    <property type="evidence" value="ECO:0007669"/>
    <property type="project" value="UniProtKB-UniRule"/>
</dbReference>
<dbReference type="GO" id="GO:0016887">
    <property type="term" value="F:ATP hydrolysis activity"/>
    <property type="evidence" value="ECO:0007669"/>
    <property type="project" value="InterPro"/>
</dbReference>
<dbReference type="GO" id="GO:0008233">
    <property type="term" value="F:peptidase activity"/>
    <property type="evidence" value="ECO:0007669"/>
    <property type="project" value="InterPro"/>
</dbReference>
<dbReference type="GO" id="GO:0036402">
    <property type="term" value="F:proteasome-activating activity"/>
    <property type="evidence" value="ECO:0007669"/>
    <property type="project" value="UniProtKB-UniRule"/>
</dbReference>
<dbReference type="GO" id="GO:0043335">
    <property type="term" value="P:protein unfolding"/>
    <property type="evidence" value="ECO:0007669"/>
    <property type="project" value="UniProtKB-UniRule"/>
</dbReference>
<dbReference type="GO" id="GO:0051603">
    <property type="term" value="P:proteolysis involved in protein catabolic process"/>
    <property type="evidence" value="ECO:0007669"/>
    <property type="project" value="TreeGrafter"/>
</dbReference>
<dbReference type="CDD" id="cd19498">
    <property type="entry name" value="RecA-like_HslU"/>
    <property type="match status" value="1"/>
</dbReference>
<dbReference type="FunFam" id="3.40.50.300:FF:000220">
    <property type="entry name" value="ATP-dependent protease ATPase subunit HslU"/>
    <property type="match status" value="1"/>
</dbReference>
<dbReference type="Gene3D" id="1.10.8.60">
    <property type="match status" value="1"/>
</dbReference>
<dbReference type="Gene3D" id="3.40.50.300">
    <property type="entry name" value="P-loop containing nucleotide triphosphate hydrolases"/>
    <property type="match status" value="2"/>
</dbReference>
<dbReference type="HAMAP" id="MF_00249">
    <property type="entry name" value="HslU"/>
    <property type="match status" value="1"/>
</dbReference>
<dbReference type="InterPro" id="IPR003593">
    <property type="entry name" value="AAA+_ATPase"/>
</dbReference>
<dbReference type="InterPro" id="IPR050052">
    <property type="entry name" value="ATP-dep_Clp_protease_ClpX"/>
</dbReference>
<dbReference type="InterPro" id="IPR003959">
    <property type="entry name" value="ATPase_AAA_core"/>
</dbReference>
<dbReference type="InterPro" id="IPR019489">
    <property type="entry name" value="Clp_ATPase_C"/>
</dbReference>
<dbReference type="InterPro" id="IPR004491">
    <property type="entry name" value="HslU"/>
</dbReference>
<dbReference type="InterPro" id="IPR027417">
    <property type="entry name" value="P-loop_NTPase"/>
</dbReference>
<dbReference type="NCBIfam" id="TIGR00390">
    <property type="entry name" value="hslU"/>
    <property type="match status" value="1"/>
</dbReference>
<dbReference type="NCBIfam" id="NF003544">
    <property type="entry name" value="PRK05201.1"/>
    <property type="match status" value="1"/>
</dbReference>
<dbReference type="PANTHER" id="PTHR48102">
    <property type="entry name" value="ATP-DEPENDENT CLP PROTEASE ATP-BINDING SUBUNIT CLPX-LIKE, MITOCHONDRIAL-RELATED"/>
    <property type="match status" value="1"/>
</dbReference>
<dbReference type="PANTHER" id="PTHR48102:SF3">
    <property type="entry name" value="ATP-DEPENDENT PROTEASE ATPASE SUBUNIT HSLU"/>
    <property type="match status" value="1"/>
</dbReference>
<dbReference type="Pfam" id="PF00004">
    <property type="entry name" value="AAA"/>
    <property type="match status" value="1"/>
</dbReference>
<dbReference type="Pfam" id="PF07724">
    <property type="entry name" value="AAA_2"/>
    <property type="match status" value="1"/>
</dbReference>
<dbReference type="SMART" id="SM00382">
    <property type="entry name" value="AAA"/>
    <property type="match status" value="1"/>
</dbReference>
<dbReference type="SMART" id="SM01086">
    <property type="entry name" value="ClpB_D2-small"/>
    <property type="match status" value="1"/>
</dbReference>
<dbReference type="SUPFAM" id="SSF52540">
    <property type="entry name" value="P-loop containing nucleoside triphosphate hydrolases"/>
    <property type="match status" value="1"/>
</dbReference>
<protein>
    <recommendedName>
        <fullName evidence="1">ATP-dependent protease ATPase subunit HslU</fullName>
    </recommendedName>
    <alternativeName>
        <fullName evidence="1">Unfoldase HslU</fullName>
    </alternativeName>
</protein>
<organism>
    <name type="scientific">Thermotoga petrophila (strain ATCC BAA-488 / DSM 13995 / JCM 10881 / RKU-1)</name>
    <dbReference type="NCBI Taxonomy" id="390874"/>
    <lineage>
        <taxon>Bacteria</taxon>
        <taxon>Thermotogati</taxon>
        <taxon>Thermotogota</taxon>
        <taxon>Thermotogae</taxon>
        <taxon>Thermotogales</taxon>
        <taxon>Thermotogaceae</taxon>
        <taxon>Thermotoga</taxon>
    </lineage>
</organism>
<name>HSLU_THEP1</name>
<feature type="chain" id="PRO_1000012824" description="ATP-dependent protease ATPase subunit HslU">
    <location>
        <begin position="1"/>
        <end position="463"/>
    </location>
</feature>
<feature type="binding site" evidence="1">
    <location>
        <position position="21"/>
    </location>
    <ligand>
        <name>ATP</name>
        <dbReference type="ChEBI" id="CHEBI:30616"/>
    </ligand>
</feature>
<feature type="binding site" evidence="1">
    <location>
        <begin position="63"/>
        <end position="68"/>
    </location>
    <ligand>
        <name>ATP</name>
        <dbReference type="ChEBI" id="CHEBI:30616"/>
    </ligand>
</feature>
<feature type="binding site" evidence="1">
    <location>
        <position position="276"/>
    </location>
    <ligand>
        <name>ATP</name>
        <dbReference type="ChEBI" id="CHEBI:30616"/>
    </ligand>
</feature>
<feature type="binding site" evidence="1">
    <location>
        <position position="341"/>
    </location>
    <ligand>
        <name>ATP</name>
        <dbReference type="ChEBI" id="CHEBI:30616"/>
    </ligand>
</feature>
<feature type="binding site" evidence="1">
    <location>
        <position position="413"/>
    </location>
    <ligand>
        <name>ATP</name>
        <dbReference type="ChEBI" id="CHEBI:30616"/>
    </ligand>
</feature>
<accession>A5IJQ2</accession>
<sequence length="463" mass="53007">MKSFDEMTPKEIVQELDKYIVGQYEAKKAVAIAVRNRIRRQKLPEEWRKEVLPKNILMIGPTGVGKTEIARRLAQLSGSPFLKVEATRFTEVGYVGKNVDSMIRDLVEISVNMVKQEKIKEVERQAEELVEERILDALVPESKAVPVVTNPFINLITGGQQQQYTPEDRRRFRAKREEMREKLRKGELENEEIEIELEETVSPFMGIFGPGMEDLGIEITNMFSGMLPKQKKKRKMKVSEARKVLLPLEAEKLIDMDKVVQEALDRAQNRGIIFIDEIDKIAGKESAVGPDVSRQGVQRDLLPIVEGTTIMTKYGPVRTDYILFIAAGAFHVSRPSDLIPELQGRFPIRVELSPLTEEDFVRILKEPENAIIKQYQALLSTEGVELVFTEDGIREMARIAYQLNQRLENIGARRLYTVAEKVLEEISFEAPDIPEKRVVVDAEYVRRRLEKIVQDEDLSAYIL</sequence>
<keyword id="KW-0067">ATP-binding</keyword>
<keyword id="KW-0143">Chaperone</keyword>
<keyword id="KW-0963">Cytoplasm</keyword>
<keyword id="KW-0547">Nucleotide-binding</keyword>
<keyword id="KW-0346">Stress response</keyword>
<proteinExistence type="inferred from homology"/>